<evidence type="ECO:0000255" key="1">
    <source>
        <dbReference type="HAMAP-Rule" id="MF_00531"/>
    </source>
</evidence>
<evidence type="ECO:0000305" key="2"/>
<proteinExistence type="inferred from homology"/>
<keyword id="KW-0150">Chloroplast</keyword>
<keyword id="KW-0934">Plastid</keyword>
<keyword id="KW-1185">Reference proteome</keyword>
<keyword id="KW-0687">Ribonucleoprotein</keyword>
<keyword id="KW-0689">Ribosomal protein</keyword>
<keyword id="KW-0694">RNA-binding</keyword>
<keyword id="KW-0699">rRNA-binding</keyword>
<feature type="chain" id="PRO_0000129982" description="Small ribosomal subunit protein uS19c">
    <location>
        <begin position="1"/>
        <end position="92"/>
    </location>
</feature>
<organism>
    <name type="scientific">Physcomitrium patens</name>
    <name type="common">Spreading-leaved earth moss</name>
    <name type="synonym">Physcomitrella patens</name>
    <dbReference type="NCBI Taxonomy" id="3218"/>
    <lineage>
        <taxon>Eukaryota</taxon>
        <taxon>Viridiplantae</taxon>
        <taxon>Streptophyta</taxon>
        <taxon>Embryophyta</taxon>
        <taxon>Bryophyta</taxon>
        <taxon>Bryophytina</taxon>
        <taxon>Bryopsida</taxon>
        <taxon>Funariidae</taxon>
        <taxon>Funariales</taxon>
        <taxon>Funariaceae</taxon>
        <taxon>Physcomitrium</taxon>
    </lineage>
</organism>
<accession>Q6YXK6</accession>
<protein>
    <recommendedName>
        <fullName evidence="1">Small ribosomal subunit protein uS19c</fullName>
    </recommendedName>
    <alternativeName>
        <fullName evidence="2">30S ribosomal protein S19, chloroplastic</fullName>
    </alternativeName>
</protein>
<reference key="1">
    <citation type="journal article" date="2003" name="Nucleic Acids Res.">
        <title>Complete chloroplast DNA sequence of the moss Physcomitrella patens: evidence for the loss and relocation of rpoA from the chloroplast to the nucleus.</title>
        <authorList>
            <person name="Sugiura C."/>
            <person name="Kobayashi Y."/>
            <person name="Setsuyuki A."/>
            <person name="Sugita C."/>
            <person name="Sugita M."/>
        </authorList>
    </citation>
    <scope>NUCLEOTIDE SEQUENCE [LARGE SCALE GENOMIC DNA]</scope>
    <source>
        <strain>cv. Gransden 2004</strain>
    </source>
</reference>
<geneLocation type="chloroplast"/>
<name>RR19_PHYPA</name>
<gene>
    <name evidence="1" type="primary">rps19</name>
</gene>
<sequence length="92" mass="10610">MTRSLKKGPFVADHLLKKIEDLNLKKEKKIIITWSRASTIVPTMIGHTIAVYNGQEHLPIYITDRMIGHKLGEFAPTRNFRGHTKSDKKSRR</sequence>
<dbReference type="EMBL" id="AP005672">
    <property type="protein sequence ID" value="BAC85082.1"/>
    <property type="molecule type" value="Genomic_DNA"/>
</dbReference>
<dbReference type="RefSeq" id="NP_904232.1">
    <property type="nucleotide sequence ID" value="NC_005087.2"/>
</dbReference>
<dbReference type="RefSeq" id="YP_009477562.1">
    <property type="nucleotide sequence ID" value="NC_037465.1"/>
</dbReference>
<dbReference type="SMR" id="Q6YXK6"/>
<dbReference type="FunCoup" id="Q6YXK6">
    <property type="interactions" value="102"/>
</dbReference>
<dbReference type="STRING" id="3218.Q6YXK6"/>
<dbReference type="GeneID" id="2546776"/>
<dbReference type="GeneID" id="36487195"/>
<dbReference type="KEGG" id="ppp:2546776"/>
<dbReference type="InParanoid" id="Q6YXK6"/>
<dbReference type="OrthoDB" id="2043at2759"/>
<dbReference type="Proteomes" id="UP000006727">
    <property type="component" value="Chloroplast"/>
</dbReference>
<dbReference type="GO" id="GO:0009507">
    <property type="term" value="C:chloroplast"/>
    <property type="evidence" value="ECO:0007669"/>
    <property type="project" value="UniProtKB-SubCell"/>
</dbReference>
<dbReference type="GO" id="GO:0005763">
    <property type="term" value="C:mitochondrial small ribosomal subunit"/>
    <property type="evidence" value="ECO:0000318"/>
    <property type="project" value="GO_Central"/>
</dbReference>
<dbReference type="GO" id="GO:0019843">
    <property type="term" value="F:rRNA binding"/>
    <property type="evidence" value="ECO:0007669"/>
    <property type="project" value="UniProtKB-UniRule"/>
</dbReference>
<dbReference type="GO" id="GO:0003735">
    <property type="term" value="F:structural constituent of ribosome"/>
    <property type="evidence" value="ECO:0000318"/>
    <property type="project" value="GO_Central"/>
</dbReference>
<dbReference type="GO" id="GO:0000028">
    <property type="term" value="P:ribosomal small subunit assembly"/>
    <property type="evidence" value="ECO:0000318"/>
    <property type="project" value="GO_Central"/>
</dbReference>
<dbReference type="GO" id="GO:0006412">
    <property type="term" value="P:translation"/>
    <property type="evidence" value="ECO:0007669"/>
    <property type="project" value="UniProtKB-UniRule"/>
</dbReference>
<dbReference type="FunFam" id="3.30.860.10:FF:000001">
    <property type="entry name" value="30S ribosomal protein S19"/>
    <property type="match status" value="1"/>
</dbReference>
<dbReference type="Gene3D" id="3.30.860.10">
    <property type="entry name" value="30s Ribosomal Protein S19, Chain A"/>
    <property type="match status" value="1"/>
</dbReference>
<dbReference type="HAMAP" id="MF_00531">
    <property type="entry name" value="Ribosomal_uS19"/>
    <property type="match status" value="1"/>
</dbReference>
<dbReference type="InterPro" id="IPR002222">
    <property type="entry name" value="Ribosomal_uS19"/>
</dbReference>
<dbReference type="InterPro" id="IPR005732">
    <property type="entry name" value="Ribosomal_uS19_bac-type"/>
</dbReference>
<dbReference type="InterPro" id="IPR020934">
    <property type="entry name" value="Ribosomal_uS19_CS"/>
</dbReference>
<dbReference type="InterPro" id="IPR023575">
    <property type="entry name" value="Ribosomal_uS19_SF"/>
</dbReference>
<dbReference type="NCBIfam" id="TIGR01050">
    <property type="entry name" value="rpsS_bact"/>
    <property type="match status" value="1"/>
</dbReference>
<dbReference type="PANTHER" id="PTHR11880">
    <property type="entry name" value="RIBOSOMAL PROTEIN S19P FAMILY MEMBER"/>
    <property type="match status" value="1"/>
</dbReference>
<dbReference type="PANTHER" id="PTHR11880:SF8">
    <property type="entry name" value="SMALL RIBOSOMAL SUBUNIT PROTEIN US19M"/>
    <property type="match status" value="1"/>
</dbReference>
<dbReference type="Pfam" id="PF00203">
    <property type="entry name" value="Ribosomal_S19"/>
    <property type="match status" value="1"/>
</dbReference>
<dbReference type="PIRSF" id="PIRSF002144">
    <property type="entry name" value="Ribosomal_S19"/>
    <property type="match status" value="1"/>
</dbReference>
<dbReference type="PRINTS" id="PR00975">
    <property type="entry name" value="RIBOSOMALS19"/>
</dbReference>
<dbReference type="SUPFAM" id="SSF54570">
    <property type="entry name" value="Ribosomal protein S19"/>
    <property type="match status" value="1"/>
</dbReference>
<dbReference type="PROSITE" id="PS00323">
    <property type="entry name" value="RIBOSOMAL_S19"/>
    <property type="match status" value="1"/>
</dbReference>
<comment type="function">
    <text evidence="1">Protein S19 forms a complex with S13 that binds strongly to the 16S ribosomal RNA.</text>
</comment>
<comment type="subcellular location">
    <subcellularLocation>
        <location>Plastid</location>
        <location>Chloroplast</location>
    </subcellularLocation>
</comment>
<comment type="similarity">
    <text evidence="1">Belongs to the universal ribosomal protein uS19 family.</text>
</comment>